<comment type="function">
    <text evidence="1">E3 ubiquitin ligase that plays an essential role in the organization of autophagic response and ubiquitination upon lysosomal and phagosomal damages. Plays a role in the stress-induced biogenesis and degradation of protein aggresomes by regulating the p62-KEAP1-NRF2 signaling and particularly by modulating the ubiquitination levels and thus stability of NRF2. Acts as a scaffold protein and facilitates autophagic degradation of protein aggregates by interacting with p62/SQSTM, ATG16L1 and LC3B/MAP1LC3B. In turn, protects the cell against oxidative stress-induced cell death as a consequence of endomembrane damage.</text>
</comment>
<comment type="catalytic activity">
    <reaction evidence="1">
        <text>S-ubiquitinyl-[E2 ubiquitin-conjugating enzyme]-L-cysteine + [acceptor protein]-L-lysine = [E2 ubiquitin-conjugating enzyme]-L-cysteine + N(6)-ubiquitinyl-[acceptor protein]-L-lysine.</text>
        <dbReference type="EC" id="2.3.2.27"/>
    </reaction>
</comment>
<comment type="subunit">
    <text evidence="1">Homodimerizes via its coiled-coil domain. Heterodimerizes with MID1, TRIM24 and PML. Interacts with Galectin-3/LGALS3 in a ULK1-dependent manner; this interaction mediates autophagy of damage endomembranes. Interacts with BECN1. Interacts with ATG16L1. Interacts with p62/SQSTM and LC3B/MAP1LC3B.</text>
</comment>
<comment type="subcellular location">
    <subcellularLocation>
        <location evidence="1">Cytoplasm</location>
    </subcellularLocation>
</comment>
<comment type="alternative products">
    <event type="alternative splicing"/>
    <isoform>
        <id>Q99PP9-1</id>
        <name>1</name>
        <sequence type="displayed"/>
    </isoform>
    <isoform>
        <id>Q99PP9-2</id>
        <name>2</name>
        <sequence type="described" ref="VSP_009099 VSP_009100"/>
    </isoform>
    <isoform>
        <id>Q99PP9-3</id>
        <name>3</name>
        <sequence type="described" ref="VSP_009101"/>
    </isoform>
</comment>
<comment type="tissue specificity">
    <text>Widely expressed. Expressed in basal keratinocytes.</text>
</comment>
<comment type="PTM">
    <text evidence="1">Phosphorylated by ULK1.</text>
</comment>
<comment type="PTM">
    <text evidence="1">Auto-ubiquitinates via its B-Boxes.</text>
</comment>
<comment type="similarity">
    <text evidence="7">Belongs to the TRIM/RBCC family.</text>
</comment>
<accession>Q99PP9</accession>
<accession>Q7TPY6</accession>
<accession>Q8C332</accession>
<accession>Q8C6V0</accession>
<feature type="chain" id="PRO_0000056223" description="Tripartite motif-containing protein 16">
    <location>
        <begin position="1"/>
        <end position="556"/>
    </location>
</feature>
<feature type="domain" description="B30.2/SPRY" evidence="3">
    <location>
        <begin position="347"/>
        <end position="545"/>
    </location>
</feature>
<feature type="zinc finger region" description="B box-type 1">
    <location>
        <begin position="64"/>
        <end position="113"/>
    </location>
</feature>
<feature type="zinc finger region" description="B box-type 2">
    <location>
        <begin position="117"/>
        <end position="156"/>
    </location>
</feature>
<feature type="region of interest" description="Disordered" evidence="4">
    <location>
        <begin position="1"/>
        <end position="60"/>
    </location>
</feature>
<feature type="coiled-coil region" evidence="2">
    <location>
        <begin position="163"/>
        <end position="266"/>
    </location>
</feature>
<feature type="coiled-coil region" evidence="2">
    <location>
        <begin position="312"/>
        <end position="332"/>
    </location>
</feature>
<feature type="compositionally biased region" description="Basic and acidic residues" evidence="4">
    <location>
        <begin position="33"/>
        <end position="56"/>
    </location>
</feature>
<feature type="modified residue" description="Phosphoserine" evidence="1">
    <location>
        <position position="107"/>
    </location>
</feature>
<feature type="modified residue" description="Phosphoserine" evidence="1">
    <location>
        <position position="195"/>
    </location>
</feature>
<feature type="splice variant" id="VSP_009101" description="In isoform 3." evidence="5">
    <location>
        <begin position="1"/>
        <end position="87"/>
    </location>
</feature>
<feature type="splice variant" id="VSP_009099" description="In isoform 2." evidence="6">
    <original>VSPFRRLG</original>
    <variation>AFMMTLLM</variation>
    <location>
        <begin position="481"/>
        <end position="488"/>
    </location>
</feature>
<feature type="splice variant" id="VSP_009100" description="In isoform 2." evidence="6">
    <location>
        <begin position="489"/>
        <end position="556"/>
    </location>
</feature>
<feature type="sequence conflict" description="In Ref. 2; BAC35278/BAC39806." evidence="7" ref="2">
    <original>V</original>
    <variation>A</variation>
    <location>
        <position position="33"/>
    </location>
</feature>
<feature type="sequence conflict" description="In Ref. 2; BAC35278/BAC39806." evidence="7" ref="2">
    <original>L</original>
    <variation>V</variation>
    <location>
        <position position="58"/>
    </location>
</feature>
<feature type="sequence conflict" description="In Ref. 1; AAM46701." evidence="7" ref="1">
    <original>E</original>
    <variation>EE</variation>
    <location>
        <position position="63"/>
    </location>
</feature>
<feature type="sequence conflict" description="In Ref. 3." evidence="7" ref="3">
    <original>E</original>
    <variation>K</variation>
    <location>
        <position position="322"/>
    </location>
</feature>
<feature type="sequence conflict" description="In Ref. 3." evidence="7" ref="3">
    <original>V</original>
    <variation>A</variation>
    <location>
        <position position="481"/>
    </location>
</feature>
<feature type="sequence conflict" description="In Ref. 3." evidence="7" ref="3">
    <original>D</original>
    <variation>E</variation>
    <location>
        <position position="515"/>
    </location>
</feature>
<feature type="sequence conflict" description="In Ref. 3." evidence="7" ref="3">
    <original>N</original>
    <variation>D</variation>
    <location>
        <position position="533"/>
    </location>
</feature>
<organism>
    <name type="scientific">Mus musculus</name>
    <name type="common">Mouse</name>
    <dbReference type="NCBI Taxonomy" id="10090"/>
    <lineage>
        <taxon>Eukaryota</taxon>
        <taxon>Metazoa</taxon>
        <taxon>Chordata</taxon>
        <taxon>Craniata</taxon>
        <taxon>Vertebrata</taxon>
        <taxon>Euteleostomi</taxon>
        <taxon>Mammalia</taxon>
        <taxon>Eutheria</taxon>
        <taxon>Euarchontoglires</taxon>
        <taxon>Glires</taxon>
        <taxon>Rodentia</taxon>
        <taxon>Myomorpha</taxon>
        <taxon>Muroidea</taxon>
        <taxon>Muridae</taxon>
        <taxon>Murinae</taxon>
        <taxon>Mus</taxon>
        <taxon>Mus</taxon>
    </lineage>
</organism>
<gene>
    <name type="primary">Trim16</name>
    <name type="synonym">Ebbp</name>
</gene>
<protein>
    <recommendedName>
        <fullName>Tripartite motif-containing protein 16</fullName>
        <ecNumber evidence="1">2.3.2.27</ecNumber>
    </recommendedName>
    <alternativeName>
        <fullName>E3 ubiquitin-protein ligase TRIM16</fullName>
    </alternativeName>
    <alternativeName>
        <fullName>Estrogen-responsive B box protein</fullName>
    </alternativeName>
</protein>
<reference key="1">
    <citation type="journal article" date="2002" name="J. Biol. Chem.">
        <title>The estrogen-responsive B box protein: a novel regulator of keratinocyte differentiation.</title>
        <authorList>
            <person name="Beer H.-D."/>
            <person name="Munding C."/>
            <person name="Dubois N."/>
            <person name="Mamie C."/>
            <person name="Hohl D."/>
            <person name="Werner S."/>
        </authorList>
    </citation>
    <scope>NUCLEOTIDE SEQUENCE [MRNA] (ISOFORM 1)</scope>
    <source>
        <strain>BALB/cJ</strain>
    </source>
</reference>
<reference key="2">
    <citation type="journal article" date="2005" name="Science">
        <title>The transcriptional landscape of the mammalian genome.</title>
        <authorList>
            <person name="Carninci P."/>
            <person name="Kasukawa T."/>
            <person name="Katayama S."/>
            <person name="Gough J."/>
            <person name="Frith M.C."/>
            <person name="Maeda N."/>
            <person name="Oyama R."/>
            <person name="Ravasi T."/>
            <person name="Lenhard B."/>
            <person name="Wells C."/>
            <person name="Kodzius R."/>
            <person name="Shimokawa K."/>
            <person name="Bajic V.B."/>
            <person name="Brenner S.E."/>
            <person name="Batalov S."/>
            <person name="Forrest A.R."/>
            <person name="Zavolan M."/>
            <person name="Davis M.J."/>
            <person name="Wilming L.G."/>
            <person name="Aidinis V."/>
            <person name="Allen J.E."/>
            <person name="Ambesi-Impiombato A."/>
            <person name="Apweiler R."/>
            <person name="Aturaliya R.N."/>
            <person name="Bailey T.L."/>
            <person name="Bansal M."/>
            <person name="Baxter L."/>
            <person name="Beisel K.W."/>
            <person name="Bersano T."/>
            <person name="Bono H."/>
            <person name="Chalk A.M."/>
            <person name="Chiu K.P."/>
            <person name="Choudhary V."/>
            <person name="Christoffels A."/>
            <person name="Clutterbuck D.R."/>
            <person name="Crowe M.L."/>
            <person name="Dalla E."/>
            <person name="Dalrymple B.P."/>
            <person name="de Bono B."/>
            <person name="Della Gatta G."/>
            <person name="di Bernardo D."/>
            <person name="Down T."/>
            <person name="Engstrom P."/>
            <person name="Fagiolini M."/>
            <person name="Faulkner G."/>
            <person name="Fletcher C.F."/>
            <person name="Fukushima T."/>
            <person name="Furuno M."/>
            <person name="Futaki S."/>
            <person name="Gariboldi M."/>
            <person name="Georgii-Hemming P."/>
            <person name="Gingeras T.R."/>
            <person name="Gojobori T."/>
            <person name="Green R.E."/>
            <person name="Gustincich S."/>
            <person name="Harbers M."/>
            <person name="Hayashi Y."/>
            <person name="Hensch T.K."/>
            <person name="Hirokawa N."/>
            <person name="Hill D."/>
            <person name="Huminiecki L."/>
            <person name="Iacono M."/>
            <person name="Ikeo K."/>
            <person name="Iwama A."/>
            <person name="Ishikawa T."/>
            <person name="Jakt M."/>
            <person name="Kanapin A."/>
            <person name="Katoh M."/>
            <person name="Kawasawa Y."/>
            <person name="Kelso J."/>
            <person name="Kitamura H."/>
            <person name="Kitano H."/>
            <person name="Kollias G."/>
            <person name="Krishnan S.P."/>
            <person name="Kruger A."/>
            <person name="Kummerfeld S.K."/>
            <person name="Kurochkin I.V."/>
            <person name="Lareau L.F."/>
            <person name="Lazarevic D."/>
            <person name="Lipovich L."/>
            <person name="Liu J."/>
            <person name="Liuni S."/>
            <person name="McWilliam S."/>
            <person name="Madan Babu M."/>
            <person name="Madera M."/>
            <person name="Marchionni L."/>
            <person name="Matsuda H."/>
            <person name="Matsuzawa S."/>
            <person name="Miki H."/>
            <person name="Mignone F."/>
            <person name="Miyake S."/>
            <person name="Morris K."/>
            <person name="Mottagui-Tabar S."/>
            <person name="Mulder N."/>
            <person name="Nakano N."/>
            <person name="Nakauchi H."/>
            <person name="Ng P."/>
            <person name="Nilsson R."/>
            <person name="Nishiguchi S."/>
            <person name="Nishikawa S."/>
            <person name="Nori F."/>
            <person name="Ohara O."/>
            <person name="Okazaki Y."/>
            <person name="Orlando V."/>
            <person name="Pang K.C."/>
            <person name="Pavan W.J."/>
            <person name="Pavesi G."/>
            <person name="Pesole G."/>
            <person name="Petrovsky N."/>
            <person name="Piazza S."/>
            <person name="Reed J."/>
            <person name="Reid J.F."/>
            <person name="Ring B.Z."/>
            <person name="Ringwald M."/>
            <person name="Rost B."/>
            <person name="Ruan Y."/>
            <person name="Salzberg S.L."/>
            <person name="Sandelin A."/>
            <person name="Schneider C."/>
            <person name="Schoenbach C."/>
            <person name="Sekiguchi K."/>
            <person name="Semple C.A."/>
            <person name="Seno S."/>
            <person name="Sessa L."/>
            <person name="Sheng Y."/>
            <person name="Shibata Y."/>
            <person name="Shimada H."/>
            <person name="Shimada K."/>
            <person name="Silva D."/>
            <person name="Sinclair B."/>
            <person name="Sperling S."/>
            <person name="Stupka E."/>
            <person name="Sugiura K."/>
            <person name="Sultana R."/>
            <person name="Takenaka Y."/>
            <person name="Taki K."/>
            <person name="Tammoja K."/>
            <person name="Tan S.L."/>
            <person name="Tang S."/>
            <person name="Taylor M.S."/>
            <person name="Tegner J."/>
            <person name="Teichmann S.A."/>
            <person name="Ueda H.R."/>
            <person name="van Nimwegen E."/>
            <person name="Verardo R."/>
            <person name="Wei C.L."/>
            <person name="Yagi K."/>
            <person name="Yamanishi H."/>
            <person name="Zabarovsky E."/>
            <person name="Zhu S."/>
            <person name="Zimmer A."/>
            <person name="Hide W."/>
            <person name="Bult C."/>
            <person name="Grimmond S.M."/>
            <person name="Teasdale R.D."/>
            <person name="Liu E.T."/>
            <person name="Brusic V."/>
            <person name="Quackenbush J."/>
            <person name="Wahlestedt C."/>
            <person name="Mattick J.S."/>
            <person name="Hume D.A."/>
            <person name="Kai C."/>
            <person name="Sasaki D."/>
            <person name="Tomaru Y."/>
            <person name="Fukuda S."/>
            <person name="Kanamori-Katayama M."/>
            <person name="Suzuki M."/>
            <person name="Aoki J."/>
            <person name="Arakawa T."/>
            <person name="Iida J."/>
            <person name="Imamura K."/>
            <person name="Itoh M."/>
            <person name="Kato T."/>
            <person name="Kawaji H."/>
            <person name="Kawagashira N."/>
            <person name="Kawashima T."/>
            <person name="Kojima M."/>
            <person name="Kondo S."/>
            <person name="Konno H."/>
            <person name="Nakano K."/>
            <person name="Ninomiya N."/>
            <person name="Nishio T."/>
            <person name="Okada M."/>
            <person name="Plessy C."/>
            <person name="Shibata K."/>
            <person name="Shiraki T."/>
            <person name="Suzuki S."/>
            <person name="Tagami M."/>
            <person name="Waki K."/>
            <person name="Watahiki A."/>
            <person name="Okamura-Oho Y."/>
            <person name="Suzuki H."/>
            <person name="Kawai J."/>
            <person name="Hayashizaki Y."/>
        </authorList>
    </citation>
    <scope>NUCLEOTIDE SEQUENCE [LARGE SCALE MRNA] (ISOFORMS 1 AND 2)</scope>
    <source>
        <strain>C57BL/6J</strain>
        <tissue>Lung</tissue>
    </source>
</reference>
<reference key="3">
    <citation type="journal article" date="2004" name="Genome Res.">
        <title>The status, quality, and expansion of the NIH full-length cDNA project: the Mammalian Gene Collection (MGC).</title>
        <authorList>
            <consortium name="The MGC Project Team"/>
        </authorList>
    </citation>
    <scope>NUCLEOTIDE SEQUENCE [LARGE SCALE MRNA] (ISOFORM 3)</scope>
    <source>
        <strain>C3H/He</strain>
        <tissue>Osteoblast</tissue>
    </source>
</reference>
<reference key="4">
    <citation type="journal article" date="2001" name="EMBO J.">
        <title>The tripartite motif family identifies cell compartments.</title>
        <authorList>
            <person name="Reymond A."/>
            <person name="Meroni G."/>
            <person name="Fantozzi A."/>
            <person name="Merla G."/>
            <person name="Cairo S."/>
            <person name="Luzi L."/>
            <person name="Riganelli D."/>
            <person name="Zanaria E."/>
            <person name="Messali S."/>
            <person name="Cainarca S."/>
            <person name="Guffanti A."/>
            <person name="Minucci S."/>
            <person name="Pelicci P.G."/>
            <person name="Ballabio A."/>
        </authorList>
    </citation>
    <scope>NUCLEOTIDE SEQUENCE [MRNA] OF 345-556 (ISOFORMS 1/3)</scope>
</reference>
<reference key="5">
    <citation type="journal article" date="2010" name="Cell">
        <title>A tissue-specific atlas of mouse protein phosphorylation and expression.</title>
        <authorList>
            <person name="Huttlin E.L."/>
            <person name="Jedrychowski M.P."/>
            <person name="Elias J.E."/>
            <person name="Goswami T."/>
            <person name="Rad R."/>
            <person name="Beausoleil S.A."/>
            <person name="Villen J."/>
            <person name="Haas W."/>
            <person name="Sowa M.E."/>
            <person name="Gygi S.P."/>
        </authorList>
    </citation>
    <scope>IDENTIFICATION BY MASS SPECTROMETRY [LARGE SCALE ANALYSIS]</scope>
    <source>
        <tissue>Lung</tissue>
        <tissue>Pancreas</tissue>
    </source>
</reference>
<keyword id="KW-0025">Alternative splicing</keyword>
<keyword id="KW-0175">Coiled coil</keyword>
<keyword id="KW-0963">Cytoplasm</keyword>
<keyword id="KW-0479">Metal-binding</keyword>
<keyword id="KW-0597">Phosphoprotein</keyword>
<keyword id="KW-1185">Reference proteome</keyword>
<keyword id="KW-0677">Repeat</keyword>
<keyword id="KW-0808">Transferase</keyword>
<keyword id="KW-0832">Ubl conjugation</keyword>
<keyword id="KW-0833">Ubl conjugation pathway</keyword>
<keyword id="KW-0862">Zinc</keyword>
<keyword id="KW-0863">Zinc-finger</keyword>
<evidence type="ECO:0000250" key="1">
    <source>
        <dbReference type="UniProtKB" id="O95361"/>
    </source>
</evidence>
<evidence type="ECO:0000255" key="2"/>
<evidence type="ECO:0000255" key="3">
    <source>
        <dbReference type="PROSITE-ProRule" id="PRU00548"/>
    </source>
</evidence>
<evidence type="ECO:0000256" key="4">
    <source>
        <dbReference type="SAM" id="MobiDB-lite"/>
    </source>
</evidence>
<evidence type="ECO:0000303" key="5">
    <source>
    </source>
</evidence>
<evidence type="ECO:0000303" key="6">
    <source>
    </source>
</evidence>
<evidence type="ECO:0000305" key="7"/>
<name>TRI16_MOUSE</name>
<dbReference type="EC" id="2.3.2.27" evidence="1"/>
<dbReference type="EMBL" id="AF449496">
    <property type="protein sequence ID" value="AAM46701.1"/>
    <property type="molecule type" value="mRNA"/>
</dbReference>
<dbReference type="EMBL" id="AK053139">
    <property type="protein sequence ID" value="BAC35278.1"/>
    <property type="molecule type" value="mRNA"/>
</dbReference>
<dbReference type="EMBL" id="AK087112">
    <property type="protein sequence ID" value="BAC39806.1"/>
    <property type="molecule type" value="mRNA"/>
</dbReference>
<dbReference type="EMBL" id="BC052821">
    <property type="protein sequence ID" value="AAH52821.1"/>
    <property type="molecule type" value="mRNA"/>
</dbReference>
<dbReference type="EMBL" id="AF220134">
    <property type="protein sequence ID" value="AAG53507.1"/>
    <property type="molecule type" value="mRNA"/>
</dbReference>
<dbReference type="CCDS" id="CCDS24832.1">
    <molecule id="Q99PP9-1"/>
</dbReference>
<dbReference type="RefSeq" id="NP_444399.2">
    <property type="nucleotide sequence ID" value="NM_053169.2"/>
</dbReference>
<dbReference type="RefSeq" id="XP_006534643.1">
    <molecule id="Q99PP9-3"/>
    <property type="nucleotide sequence ID" value="XM_006534580.5"/>
</dbReference>
<dbReference type="SMR" id="Q99PP9"/>
<dbReference type="BioGRID" id="220447">
    <property type="interactions" value="2"/>
</dbReference>
<dbReference type="FunCoup" id="Q99PP9">
    <property type="interactions" value="435"/>
</dbReference>
<dbReference type="STRING" id="10090.ENSMUSP00000055542"/>
<dbReference type="iPTMnet" id="Q99PP9"/>
<dbReference type="PhosphoSitePlus" id="Q99PP9"/>
<dbReference type="jPOST" id="Q99PP9"/>
<dbReference type="PaxDb" id="10090-ENSMUSP00000055542"/>
<dbReference type="PeptideAtlas" id="Q99PP9"/>
<dbReference type="ProteomicsDB" id="259090">
    <molecule id="Q99PP9-1"/>
</dbReference>
<dbReference type="ProteomicsDB" id="259091">
    <molecule id="Q99PP9-2"/>
</dbReference>
<dbReference type="ProteomicsDB" id="259092">
    <molecule id="Q99PP9-3"/>
</dbReference>
<dbReference type="Pumba" id="Q99PP9"/>
<dbReference type="Antibodypedia" id="21540">
    <property type="antibodies" value="246 antibodies from 28 providers"/>
</dbReference>
<dbReference type="DNASU" id="94092"/>
<dbReference type="Ensembl" id="ENSMUST00000108703.2">
    <molecule id="Q99PP9-3"/>
    <property type="protein sequence ID" value="ENSMUSP00000104343.2"/>
    <property type="gene ID" value="ENSMUSG00000047821.17"/>
</dbReference>
<dbReference type="GeneID" id="94092"/>
<dbReference type="KEGG" id="mmu:94092"/>
<dbReference type="UCSC" id="uc007jkc.1">
    <molecule id="Q99PP9-1"/>
    <property type="organism name" value="mouse"/>
</dbReference>
<dbReference type="AGR" id="MGI:2137356"/>
<dbReference type="CTD" id="10626"/>
<dbReference type="MGI" id="MGI:2137356">
    <property type="gene designation" value="Trim16"/>
</dbReference>
<dbReference type="VEuPathDB" id="HostDB:ENSMUSG00000047821"/>
<dbReference type="eggNOG" id="ENOG502QRVY">
    <property type="taxonomic scope" value="Eukaryota"/>
</dbReference>
<dbReference type="GeneTree" id="ENSGT00940000161116"/>
<dbReference type="HOGENOM" id="CLU_013137_0_2_1"/>
<dbReference type="InParanoid" id="Q99PP9"/>
<dbReference type="OrthoDB" id="33541at9989"/>
<dbReference type="PhylomeDB" id="Q99PP9"/>
<dbReference type="BioGRID-ORCS" id="94092">
    <property type="hits" value="2 hits in 77 CRISPR screens"/>
</dbReference>
<dbReference type="ChiTaRS" id="Trim16">
    <property type="organism name" value="mouse"/>
</dbReference>
<dbReference type="PRO" id="PR:Q99PP9"/>
<dbReference type="Proteomes" id="UP000000589">
    <property type="component" value="Chromosome 11"/>
</dbReference>
<dbReference type="RNAct" id="Q99PP9">
    <property type="molecule type" value="protein"/>
</dbReference>
<dbReference type="Bgee" id="ENSMUSG00000047821">
    <property type="expression patterns" value="Expressed in triceps brachii and 161 other cell types or tissues"/>
</dbReference>
<dbReference type="ExpressionAtlas" id="Q99PP9">
    <property type="expression patterns" value="baseline and differential"/>
</dbReference>
<dbReference type="GO" id="GO:0005737">
    <property type="term" value="C:cytoplasm"/>
    <property type="evidence" value="ECO:0000314"/>
    <property type="project" value="MGI"/>
</dbReference>
<dbReference type="GO" id="GO:0016740">
    <property type="term" value="F:transferase activity"/>
    <property type="evidence" value="ECO:0007669"/>
    <property type="project" value="UniProtKB-KW"/>
</dbReference>
<dbReference type="GO" id="GO:0008270">
    <property type="term" value="F:zinc ion binding"/>
    <property type="evidence" value="ECO:0007669"/>
    <property type="project" value="UniProtKB-KW"/>
</dbReference>
<dbReference type="CDD" id="cd19839">
    <property type="entry name" value="Bbox1_TRIM16"/>
    <property type="match status" value="1"/>
</dbReference>
<dbReference type="CDD" id="cd19769">
    <property type="entry name" value="Bbox2_TRIM16-like"/>
    <property type="match status" value="1"/>
</dbReference>
<dbReference type="CDD" id="cd12890">
    <property type="entry name" value="SPRY_PRY_TRIM16"/>
    <property type="match status" value="1"/>
</dbReference>
<dbReference type="Gene3D" id="2.60.120.920">
    <property type="match status" value="1"/>
</dbReference>
<dbReference type="Gene3D" id="4.10.830.40">
    <property type="match status" value="1"/>
</dbReference>
<dbReference type="Gene3D" id="3.30.160.60">
    <property type="entry name" value="Classic Zinc Finger"/>
    <property type="match status" value="1"/>
</dbReference>
<dbReference type="InterPro" id="IPR001870">
    <property type="entry name" value="B30.2/SPRY"/>
</dbReference>
<dbReference type="InterPro" id="IPR043136">
    <property type="entry name" value="B30.2/SPRY_sf"/>
</dbReference>
<dbReference type="InterPro" id="IPR003879">
    <property type="entry name" value="Butyrophylin_SPRY"/>
</dbReference>
<dbReference type="InterPro" id="IPR013320">
    <property type="entry name" value="ConA-like_dom_sf"/>
</dbReference>
<dbReference type="InterPro" id="IPR051051">
    <property type="entry name" value="E3_ubiq-ligase_TRIM/RNF"/>
</dbReference>
<dbReference type="InterPro" id="IPR006574">
    <property type="entry name" value="PRY"/>
</dbReference>
<dbReference type="InterPro" id="IPR003877">
    <property type="entry name" value="SPRY_dom"/>
</dbReference>
<dbReference type="InterPro" id="IPR000315">
    <property type="entry name" value="Znf_B-box"/>
</dbReference>
<dbReference type="PANTHER" id="PTHR25465">
    <property type="entry name" value="B-BOX DOMAIN CONTAINING"/>
    <property type="match status" value="1"/>
</dbReference>
<dbReference type="PANTHER" id="PTHR25465:SF10">
    <property type="entry name" value="TRIPARTITE MOTIF-CONTAINING PROTEIN 16-RELATED"/>
    <property type="match status" value="1"/>
</dbReference>
<dbReference type="Pfam" id="PF22586">
    <property type="entry name" value="ANCHR-like_BBOX"/>
    <property type="match status" value="1"/>
</dbReference>
<dbReference type="Pfam" id="PF13765">
    <property type="entry name" value="PRY"/>
    <property type="match status" value="1"/>
</dbReference>
<dbReference type="Pfam" id="PF00622">
    <property type="entry name" value="SPRY"/>
    <property type="match status" value="1"/>
</dbReference>
<dbReference type="Pfam" id="PF00643">
    <property type="entry name" value="zf-B_box"/>
    <property type="match status" value="1"/>
</dbReference>
<dbReference type="PRINTS" id="PR01407">
    <property type="entry name" value="BUTYPHLNCDUF"/>
</dbReference>
<dbReference type="SMART" id="SM00336">
    <property type="entry name" value="BBOX"/>
    <property type="match status" value="1"/>
</dbReference>
<dbReference type="SMART" id="SM00589">
    <property type="entry name" value="PRY"/>
    <property type="match status" value="1"/>
</dbReference>
<dbReference type="SMART" id="SM00449">
    <property type="entry name" value="SPRY"/>
    <property type="match status" value="1"/>
</dbReference>
<dbReference type="SUPFAM" id="SSF57845">
    <property type="entry name" value="B-box zinc-binding domain"/>
    <property type="match status" value="1"/>
</dbReference>
<dbReference type="SUPFAM" id="SSF49899">
    <property type="entry name" value="Concanavalin A-like lectins/glucanases"/>
    <property type="match status" value="1"/>
</dbReference>
<dbReference type="PROSITE" id="PS50188">
    <property type="entry name" value="B302_SPRY"/>
    <property type="match status" value="1"/>
</dbReference>
<sequence>MAELDLIAPGPLTGVTAHPLAPLGPDPVSAIPVEKEDADPLSKSGEETQEQGHDPAELGAPGEEDQILCDFCLGASRVRAVKSCLTCMVNYCEEHLRPHQENSKLHSHQLTEPAKDQDLRTCPAHHSPLVSFCHTHQQCICQECGEGEHRGDSTVSLDAARRNKEVDLRCMQLDLEQKLKLNENAIARLQANHKSVLVSVSEVKVVAEEKFGELLAAVRKAQADVMVFLEEKEQAALNQVNSIKTHLEHRSLEMEKSKQELERLAAISNTVLFLEEYCKLKKTEDTASPSIYIGLKDKLSGIRKVITDSTLNLIQLLESYKEKLQEFSREEEYDIRTQVSAIVQRKYRTSKPEPRTRDEFLQYACDITFDPDTAHRYLRLQEDNRKVTNTTPWEHPYPDLPSRFLHWRQVLSQQSLYLHRYYFEVELSGGGTYVGLTCKGIDRKGEERNSCISGNSFSWSIHWNGKEFTAWHSDTETPLKVSPFRRLGIYVNFPGGILSFYGVEYDAMTLIHKFDCKFSEPVYAAFWLSKKENAIRIVDLGEEPEKPAGSSVEAAP</sequence>
<proteinExistence type="evidence at protein level"/>